<keyword id="KW-0002">3D-structure</keyword>
<keyword id="KW-1003">Cell membrane</keyword>
<keyword id="KW-0963">Cytoplasm</keyword>
<keyword id="KW-0967">Endosome</keyword>
<keyword id="KW-0343">GTPase activation</keyword>
<keyword id="KW-0472">Membrane</keyword>
<keyword id="KW-0597">Phosphoprotein</keyword>
<keyword id="KW-1267">Proteomics identification</keyword>
<keyword id="KW-1185">Reference proteome</keyword>
<keyword id="KW-0728">SH3 domain</keyword>
<organism>
    <name type="scientific">Homo sapiens</name>
    <name type="common">Human</name>
    <dbReference type="NCBI Taxonomy" id="9606"/>
    <lineage>
        <taxon>Eukaryota</taxon>
        <taxon>Metazoa</taxon>
        <taxon>Chordata</taxon>
        <taxon>Craniata</taxon>
        <taxon>Vertebrata</taxon>
        <taxon>Euteleostomi</taxon>
        <taxon>Mammalia</taxon>
        <taxon>Eutheria</taxon>
        <taxon>Euarchontoglires</taxon>
        <taxon>Primates</taxon>
        <taxon>Haplorrhini</taxon>
        <taxon>Catarrhini</taxon>
        <taxon>Hominidae</taxon>
        <taxon>Homo</taxon>
    </lineage>
</organism>
<gene>
    <name type="primary">ARHGAP10</name>
    <name type="synonym">GRAF2</name>
</gene>
<accession>A1A4S6</accession>
<accession>A1L0S5</accession>
<accession>Q2VPC4</accession>
<accession>Q2VPC5</accession>
<accession>Q96EV3</accession>
<accession>Q96S75</accession>
<proteinExistence type="evidence at protein level"/>
<feature type="chain" id="PRO_0000304914" description="Rho GTPase-activating protein 10">
    <location>
        <begin position="1"/>
        <end position="786"/>
    </location>
</feature>
<feature type="domain" description="BAR">
    <location>
        <begin position="7"/>
        <end position="262"/>
    </location>
</feature>
<feature type="domain" description="PH" evidence="3">
    <location>
        <begin position="265"/>
        <end position="372"/>
    </location>
</feature>
<feature type="domain" description="Rho-GAP" evidence="4">
    <location>
        <begin position="389"/>
        <end position="574"/>
    </location>
</feature>
<feature type="domain" description="SH3" evidence="5">
    <location>
        <begin position="728"/>
        <end position="786"/>
    </location>
</feature>
<feature type="region of interest" description="Disordered" evidence="6">
    <location>
        <begin position="576"/>
        <end position="608"/>
    </location>
</feature>
<feature type="region of interest" description="Disordered" evidence="6">
    <location>
        <begin position="621"/>
        <end position="727"/>
    </location>
</feature>
<feature type="compositionally biased region" description="Basic residues" evidence="6">
    <location>
        <begin position="599"/>
        <end position="608"/>
    </location>
</feature>
<feature type="compositionally biased region" description="Low complexity" evidence="6">
    <location>
        <begin position="634"/>
        <end position="651"/>
    </location>
</feature>
<feature type="compositionally biased region" description="Polar residues" evidence="6">
    <location>
        <begin position="676"/>
        <end position="688"/>
    </location>
</feature>
<feature type="compositionally biased region" description="Low complexity" evidence="6">
    <location>
        <begin position="689"/>
        <end position="712"/>
    </location>
</feature>
<feature type="site" description="Arginine finger; crucial for GTP hydrolysis by stabilizing the transition state" evidence="4">
    <location>
        <position position="418"/>
    </location>
</feature>
<feature type="sequence variant" id="VAR_049141" description="In dbSNP:rs17024215.">
    <original>P</original>
    <variation>S</variation>
    <location>
        <position position="488"/>
    </location>
</feature>
<feature type="sequence variant" id="VAR_035114" description="In dbSNP:rs2276932." evidence="7">
    <original>M</original>
    <variation>V</variation>
    <location>
        <position position="684"/>
    </location>
</feature>
<feature type="sequence conflict" description="In Ref. 2; AAI09030." evidence="10" ref="2">
    <original>F</original>
    <variation>S</variation>
    <location>
        <position position="712"/>
    </location>
</feature>
<feature type="sequence conflict" description="In Ref. 1; BAB61771." evidence="10" ref="1">
    <original>E</original>
    <variation>D</variation>
    <location>
        <position position="750"/>
    </location>
</feature>
<feature type="strand" evidence="11">
    <location>
        <begin position="728"/>
        <end position="730"/>
    </location>
</feature>
<feature type="strand" evidence="11">
    <location>
        <begin position="732"/>
        <end position="737"/>
    </location>
</feature>
<feature type="strand" evidence="11">
    <location>
        <begin position="743"/>
        <end position="746"/>
    </location>
</feature>
<feature type="strand" evidence="11">
    <location>
        <begin position="754"/>
        <end position="760"/>
    </location>
</feature>
<feature type="strand" evidence="11">
    <location>
        <begin position="766"/>
        <end position="771"/>
    </location>
</feature>
<feature type="strand" evidence="11">
    <location>
        <begin position="774"/>
        <end position="779"/>
    </location>
</feature>
<feature type="helix" evidence="11">
    <location>
        <begin position="780"/>
        <end position="782"/>
    </location>
</feature>
<feature type="strand" evidence="11">
    <location>
        <begin position="783"/>
        <end position="785"/>
    </location>
</feature>
<sequence length="786" mass="89375">MGLQPLEFSDCYLDSPWFRERIRAHEAELERTNKFIKELIKDGKNLIAATKSLSVAQRKFAHSLRDFKFEFIGDAVTDDERCIDASLREFSNFLKNLEEQREIMALSVTETLIKPLEKFRKEQLGAVKEEKKKFDKETEKNYSLIDKHLNLSAKKKDSHLQEADIQVEQNRQHFYELSLEYVCKLQEIQERKKFEFVEPMLSFFQGMFTFYHQGHELAKDFNHYKMELQINIQNTRNRFEGTRSEVEELMNKIRQNPKDHKRASQFTAEGYLYVQEKRPAPFGSSWVKHYCMYRKAAKKFNMIPFEHRSGGKLGDGEVFFLKECTKRHTDSIDRRFCFDIEAADRPGVSLTMQAFSEEERKQWLEALGGKEALSHSFNTAIIPRPEGNAQLDKMGFTIIRKCISAVETRGINDQGLYRVVGVSSKVQRLLSMLMDVKTCNEVDLENSADWEVKTITSALKQYLRSLPEPLMTYELHGDFIVPAKSGSPESRVNAIHFLVHKLPEKNKEMLDILVKHLTNVSNHSKQNLMTVANLGVVFGPTLMRPQEETVAALMDLKFQNIVVEILIENHEKIFRTPPDTTFPEPTCLSASPPNAPPRQSKRQGQRTKRPVAVYNLCLELEDGDNPYPSKEDTPTSSLDSLSSPSPVTTAVPGPPGPDKNHLLADGGSFGDWASTIPGQTRSSMVQWLNPQSPTTTSSNSAVTPLSPGSSPFPFSPPATVADKPPESIRSRKARAVYPCEAEHSSELSFEIGAIFEDVQTSREPGWLEGTLNGKRGLIPQNYVKLL</sequence>
<reference key="1">
    <citation type="journal article" date="2001" name="J. Biochem.">
        <title>PKNbeta interacts with the SH3 domains of Graf and a novel Graf related protein, Graf2, which are GTPase activating proteins for Rho family.</title>
        <authorList>
            <person name="Shibata H."/>
            <person name="Oishi K."/>
            <person name="Yamagiwa A."/>
            <person name="Matsumoto M."/>
            <person name="Mukai H."/>
            <person name="Ono Y."/>
        </authorList>
    </citation>
    <scope>NUCLEOTIDE SEQUENCE [MRNA]</scope>
    <scope>FUNCTION</scope>
    <scope>INTERACTION WITH PKN3</scope>
    <scope>TISSUE SPECIFICITY</scope>
    <scope>PHOSPHORYLATION</scope>
    <scope>VARIANT VAL-684</scope>
</reference>
<reference key="2">
    <citation type="journal article" date="2004" name="Genome Res.">
        <title>The status, quality, and expansion of the NIH full-length cDNA project: the Mammalian Gene Collection (MGC).</title>
        <authorList>
            <consortium name="The MGC Project Team"/>
        </authorList>
    </citation>
    <scope>NUCLEOTIDE SEQUENCE [LARGE SCALE MRNA]</scope>
    <source>
        <tissue>Kidney</tissue>
    </source>
</reference>
<reference key="3">
    <citation type="journal article" date="2020" name="J. Cell Biol.">
        <title>GRAF2, WDR44, and MICAL1 mediate Rab8/10/11-dependent export of E-cadherin, MMP14, and CFTR DeltaF508.</title>
        <authorList>
            <person name="Lucken-Ardjomande Haesler S."/>
            <person name="Vallis Y."/>
            <person name="Pasche M."/>
            <person name="McMahon H.T."/>
        </authorList>
    </citation>
    <scope>FUNCTION</scope>
    <scope>INTERACTION WITH WDR44 AND MICAL1</scope>
    <scope>SUBCELLULAR LOCATION</scope>
    <scope>DOMAIN</scope>
</reference>
<reference key="4">
    <citation type="submission" date="2014-01" db="PDB data bank">
        <title>Solution NMR structure of SH3 domain 1 of Rho GTPase-activating protein 10 from Homo sapiens, Northeast structural genomics consortium (NESG) target HR9129A.</title>
        <authorList>
            <consortium name="Northeast structural genomics consortium (NESG)"/>
        </authorList>
    </citation>
    <scope>STRUCTURE BY NMR OF 728-786</scope>
</reference>
<evidence type="ECO:0000250" key="1"/>
<evidence type="ECO:0000250" key="2">
    <source>
        <dbReference type="UniProtKB" id="Q6Y5D8"/>
    </source>
</evidence>
<evidence type="ECO:0000255" key="3">
    <source>
        <dbReference type="PROSITE-ProRule" id="PRU00145"/>
    </source>
</evidence>
<evidence type="ECO:0000255" key="4">
    <source>
        <dbReference type="PROSITE-ProRule" id="PRU00172"/>
    </source>
</evidence>
<evidence type="ECO:0000255" key="5">
    <source>
        <dbReference type="PROSITE-ProRule" id="PRU00192"/>
    </source>
</evidence>
<evidence type="ECO:0000256" key="6">
    <source>
        <dbReference type="SAM" id="MobiDB-lite"/>
    </source>
</evidence>
<evidence type="ECO:0000269" key="7">
    <source>
    </source>
</evidence>
<evidence type="ECO:0000269" key="8">
    <source>
    </source>
</evidence>
<evidence type="ECO:0000303" key="9">
    <source>
    </source>
</evidence>
<evidence type="ECO:0000305" key="10"/>
<evidence type="ECO:0007829" key="11">
    <source>
        <dbReference type="PDB" id="2MIO"/>
    </source>
</evidence>
<dbReference type="EMBL" id="AB050785">
    <property type="protein sequence ID" value="BAB61771.1"/>
    <property type="molecule type" value="mRNA"/>
</dbReference>
<dbReference type="EMBL" id="BC011920">
    <property type="protein sequence ID" value="AAH11920.2"/>
    <property type="molecule type" value="mRNA"/>
</dbReference>
<dbReference type="EMBL" id="BC109029">
    <property type="protein sequence ID" value="AAI09030.1"/>
    <property type="molecule type" value="mRNA"/>
</dbReference>
<dbReference type="EMBL" id="BC109030">
    <property type="protein sequence ID" value="AAI09031.1"/>
    <property type="molecule type" value="mRNA"/>
</dbReference>
<dbReference type="EMBL" id="BC126899">
    <property type="protein sequence ID" value="AAI26900.1"/>
    <property type="status" value="ALT_FRAME"/>
    <property type="molecule type" value="mRNA"/>
</dbReference>
<dbReference type="EMBL" id="BC128055">
    <property type="protein sequence ID" value="AAI28056.1"/>
    <property type="molecule type" value="mRNA"/>
</dbReference>
<dbReference type="CCDS" id="CCDS34075.1"/>
<dbReference type="RefSeq" id="NP_078881.3">
    <property type="nucleotide sequence ID" value="NM_024605.3"/>
</dbReference>
<dbReference type="PDB" id="2MIO">
    <property type="method" value="NMR"/>
    <property type="chains" value="A=728-786"/>
</dbReference>
<dbReference type="PDBsum" id="2MIO"/>
<dbReference type="BMRB" id="A1A4S6"/>
<dbReference type="SMR" id="A1A4S6"/>
<dbReference type="BioGRID" id="122784">
    <property type="interactions" value="30"/>
</dbReference>
<dbReference type="CORUM" id="A1A4S6"/>
<dbReference type="FunCoup" id="A1A4S6">
    <property type="interactions" value="1081"/>
</dbReference>
<dbReference type="IntAct" id="A1A4S6">
    <property type="interactions" value="14"/>
</dbReference>
<dbReference type="MINT" id="A1A4S6"/>
<dbReference type="STRING" id="9606.ENSP00000336923"/>
<dbReference type="iPTMnet" id="A1A4S6"/>
<dbReference type="PhosphoSitePlus" id="A1A4S6"/>
<dbReference type="BioMuta" id="ARHGAP10"/>
<dbReference type="jPOST" id="A1A4S6"/>
<dbReference type="MassIVE" id="A1A4S6"/>
<dbReference type="PaxDb" id="9606-ENSP00000336923"/>
<dbReference type="PeptideAtlas" id="A1A4S6"/>
<dbReference type="ProteomicsDB" id="92"/>
<dbReference type="Pumba" id="A1A4S6"/>
<dbReference type="Antibodypedia" id="45497">
    <property type="antibodies" value="110 antibodies from 17 providers"/>
</dbReference>
<dbReference type="DNASU" id="79658"/>
<dbReference type="Ensembl" id="ENST00000336498.8">
    <property type="protein sequence ID" value="ENSP00000336923.3"/>
    <property type="gene ID" value="ENSG00000071205.12"/>
</dbReference>
<dbReference type="GeneID" id="79658"/>
<dbReference type="KEGG" id="hsa:79658"/>
<dbReference type="MANE-Select" id="ENST00000336498.8">
    <property type="protein sequence ID" value="ENSP00000336923.3"/>
    <property type="RefSeq nucleotide sequence ID" value="NM_024605.4"/>
    <property type="RefSeq protein sequence ID" value="NP_078881.3"/>
</dbReference>
<dbReference type="UCSC" id="uc003ilf.4">
    <property type="organism name" value="human"/>
</dbReference>
<dbReference type="AGR" id="HGNC:26099"/>
<dbReference type="CTD" id="79658"/>
<dbReference type="DisGeNET" id="79658"/>
<dbReference type="GeneCards" id="ARHGAP10"/>
<dbReference type="HGNC" id="HGNC:26099">
    <property type="gene designation" value="ARHGAP10"/>
</dbReference>
<dbReference type="HPA" id="ENSG00000071205">
    <property type="expression patterns" value="Low tissue specificity"/>
</dbReference>
<dbReference type="MIM" id="609746">
    <property type="type" value="gene"/>
</dbReference>
<dbReference type="neXtProt" id="NX_A1A4S6"/>
<dbReference type="OpenTargets" id="ENSG00000071205"/>
<dbReference type="PharmGKB" id="PA134904544"/>
<dbReference type="VEuPathDB" id="HostDB:ENSG00000071205"/>
<dbReference type="eggNOG" id="KOG1451">
    <property type="taxonomic scope" value="Eukaryota"/>
</dbReference>
<dbReference type="GeneTree" id="ENSGT00940000159559"/>
<dbReference type="HOGENOM" id="CLU_011532_2_0_1"/>
<dbReference type="InParanoid" id="A1A4S6"/>
<dbReference type="OMA" id="MRSPMVQ"/>
<dbReference type="OrthoDB" id="3183924at2759"/>
<dbReference type="PAN-GO" id="A1A4S6">
    <property type="GO annotations" value="4 GO annotations based on evolutionary models"/>
</dbReference>
<dbReference type="PhylomeDB" id="A1A4S6"/>
<dbReference type="TreeFam" id="TF316851"/>
<dbReference type="PathwayCommons" id="A1A4S6"/>
<dbReference type="Reactome" id="R-HSA-211728">
    <property type="pathway name" value="Regulation of PAK-2p34 activity by PS-GAP/RHG10"/>
</dbReference>
<dbReference type="Reactome" id="R-HSA-8980692">
    <property type="pathway name" value="RHOA GTPase cycle"/>
</dbReference>
<dbReference type="Reactome" id="R-HSA-9013148">
    <property type="pathway name" value="CDC42 GTPase cycle"/>
</dbReference>
<dbReference type="Reactome" id="R-HSA-9013149">
    <property type="pathway name" value="RAC1 GTPase cycle"/>
</dbReference>
<dbReference type="SignaLink" id="A1A4S6"/>
<dbReference type="SIGNOR" id="A1A4S6"/>
<dbReference type="BioGRID-ORCS" id="79658">
    <property type="hits" value="12 hits in 1147 CRISPR screens"/>
</dbReference>
<dbReference type="ChiTaRS" id="ARHGAP10">
    <property type="organism name" value="human"/>
</dbReference>
<dbReference type="EvolutionaryTrace" id="A1A4S6"/>
<dbReference type="GenomeRNAi" id="79658"/>
<dbReference type="Pharos" id="A1A4S6">
    <property type="development level" value="Tbio"/>
</dbReference>
<dbReference type="PRO" id="PR:A1A4S6"/>
<dbReference type="Proteomes" id="UP000005640">
    <property type="component" value="Chromosome 4"/>
</dbReference>
<dbReference type="RNAct" id="A1A4S6">
    <property type="molecule type" value="protein"/>
</dbReference>
<dbReference type="Bgee" id="ENSG00000071205">
    <property type="expression patterns" value="Expressed in mucosa of stomach and 134 other cell types or tissues"/>
</dbReference>
<dbReference type="ExpressionAtlas" id="A1A4S6">
    <property type="expression patterns" value="baseline and differential"/>
</dbReference>
<dbReference type="GO" id="GO:0005829">
    <property type="term" value="C:cytosol"/>
    <property type="evidence" value="ECO:0000314"/>
    <property type="project" value="UniProtKB"/>
</dbReference>
<dbReference type="GO" id="GO:0010008">
    <property type="term" value="C:endosome membrane"/>
    <property type="evidence" value="ECO:0000314"/>
    <property type="project" value="UniProtKB"/>
</dbReference>
<dbReference type="GO" id="GO:0048471">
    <property type="term" value="C:perinuclear region of cytoplasm"/>
    <property type="evidence" value="ECO:0007669"/>
    <property type="project" value="UniProtKB-SubCell"/>
</dbReference>
<dbReference type="GO" id="GO:0005886">
    <property type="term" value="C:plasma membrane"/>
    <property type="evidence" value="ECO:0007669"/>
    <property type="project" value="UniProtKB-SubCell"/>
</dbReference>
<dbReference type="GO" id="GO:0005096">
    <property type="term" value="F:GTPase activator activity"/>
    <property type="evidence" value="ECO:0000318"/>
    <property type="project" value="GO_Central"/>
</dbReference>
<dbReference type="GO" id="GO:0007010">
    <property type="term" value="P:cytoskeleton organization"/>
    <property type="evidence" value="ECO:0000318"/>
    <property type="project" value="GO_Central"/>
</dbReference>
<dbReference type="GO" id="GO:0043066">
    <property type="term" value="P:negative regulation of apoptotic process"/>
    <property type="evidence" value="ECO:0000318"/>
    <property type="project" value="GO_Central"/>
</dbReference>
<dbReference type="GO" id="GO:0051056">
    <property type="term" value="P:regulation of small GTPase mediated signal transduction"/>
    <property type="evidence" value="ECO:0000304"/>
    <property type="project" value="Reactome"/>
</dbReference>
<dbReference type="GO" id="GO:0007165">
    <property type="term" value="P:signal transduction"/>
    <property type="evidence" value="ECO:0007669"/>
    <property type="project" value="InterPro"/>
</dbReference>
<dbReference type="CDD" id="cd01249">
    <property type="entry name" value="BAR-PH_GRAF_family"/>
    <property type="match status" value="1"/>
</dbReference>
<dbReference type="CDD" id="cd07635">
    <property type="entry name" value="BAR_GRAF2"/>
    <property type="match status" value="1"/>
</dbReference>
<dbReference type="CDD" id="cd04374">
    <property type="entry name" value="RhoGAP_Graf"/>
    <property type="match status" value="1"/>
</dbReference>
<dbReference type="CDD" id="cd12065">
    <property type="entry name" value="SH3_GRAF2"/>
    <property type="match status" value="1"/>
</dbReference>
<dbReference type="FunFam" id="2.30.29.30:FF:000157">
    <property type="entry name" value="Putative rho GTPase-activating protein 10"/>
    <property type="match status" value="1"/>
</dbReference>
<dbReference type="FunFam" id="1.10.555.10:FF:000006">
    <property type="entry name" value="Rho GTPase activating protein 26"/>
    <property type="match status" value="1"/>
</dbReference>
<dbReference type="FunFam" id="1.20.1270.60:FF:000001">
    <property type="entry name" value="Rho GTPase-activating protein 26"/>
    <property type="match status" value="1"/>
</dbReference>
<dbReference type="FunFam" id="2.30.30.40:FF:000055">
    <property type="entry name" value="rho GTPase-activating protein 26 isoform X1"/>
    <property type="match status" value="1"/>
</dbReference>
<dbReference type="Gene3D" id="1.20.1270.60">
    <property type="entry name" value="Arfaptin homology (AH) domain/BAR domain"/>
    <property type="match status" value="1"/>
</dbReference>
<dbReference type="Gene3D" id="2.30.29.30">
    <property type="entry name" value="Pleckstrin-homology domain (PH domain)/Phosphotyrosine-binding domain (PTB)"/>
    <property type="match status" value="1"/>
</dbReference>
<dbReference type="Gene3D" id="1.10.555.10">
    <property type="entry name" value="Rho GTPase activation protein"/>
    <property type="match status" value="1"/>
</dbReference>
<dbReference type="Gene3D" id="2.30.30.40">
    <property type="entry name" value="SH3 Domains"/>
    <property type="match status" value="1"/>
</dbReference>
<dbReference type="InterPro" id="IPR027267">
    <property type="entry name" value="AH/BAR_dom_sf"/>
</dbReference>
<dbReference type="InterPro" id="IPR004148">
    <property type="entry name" value="BAR_dom"/>
</dbReference>
<dbReference type="InterPro" id="IPR035485">
    <property type="entry name" value="GRAF2_SH3"/>
</dbReference>
<dbReference type="InterPro" id="IPR047234">
    <property type="entry name" value="GRAF_fam"/>
</dbReference>
<dbReference type="InterPro" id="IPR011993">
    <property type="entry name" value="PH-like_dom_sf"/>
</dbReference>
<dbReference type="InterPro" id="IPR001849">
    <property type="entry name" value="PH_domain"/>
</dbReference>
<dbReference type="InterPro" id="IPR047225">
    <property type="entry name" value="PH_GRAF"/>
</dbReference>
<dbReference type="InterPro" id="IPR008936">
    <property type="entry name" value="Rho_GTPase_activation_prot"/>
</dbReference>
<dbReference type="InterPro" id="IPR000198">
    <property type="entry name" value="RhoGAP_dom"/>
</dbReference>
<dbReference type="InterPro" id="IPR036028">
    <property type="entry name" value="SH3-like_dom_sf"/>
</dbReference>
<dbReference type="InterPro" id="IPR001452">
    <property type="entry name" value="SH3_domain"/>
</dbReference>
<dbReference type="PANTHER" id="PTHR12552">
    <property type="entry name" value="OLIGOPHRENIN 1"/>
    <property type="match status" value="1"/>
</dbReference>
<dbReference type="PANTHER" id="PTHR12552:SF5">
    <property type="entry name" value="RHO GTPASE-ACTIVATING PROTEIN 10"/>
    <property type="match status" value="1"/>
</dbReference>
<dbReference type="Pfam" id="PF16746">
    <property type="entry name" value="BAR_3"/>
    <property type="match status" value="1"/>
</dbReference>
<dbReference type="Pfam" id="PF00169">
    <property type="entry name" value="PH"/>
    <property type="match status" value="1"/>
</dbReference>
<dbReference type="Pfam" id="PF00620">
    <property type="entry name" value="RhoGAP"/>
    <property type="match status" value="1"/>
</dbReference>
<dbReference type="Pfam" id="PF14604">
    <property type="entry name" value="SH3_9"/>
    <property type="match status" value="1"/>
</dbReference>
<dbReference type="SMART" id="SM00233">
    <property type="entry name" value="PH"/>
    <property type="match status" value="1"/>
</dbReference>
<dbReference type="SMART" id="SM00324">
    <property type="entry name" value="RhoGAP"/>
    <property type="match status" value="1"/>
</dbReference>
<dbReference type="SMART" id="SM00326">
    <property type="entry name" value="SH3"/>
    <property type="match status" value="1"/>
</dbReference>
<dbReference type="SUPFAM" id="SSF103657">
    <property type="entry name" value="BAR/IMD domain-like"/>
    <property type="match status" value="1"/>
</dbReference>
<dbReference type="SUPFAM" id="SSF48350">
    <property type="entry name" value="GTPase activation domain, GAP"/>
    <property type="match status" value="1"/>
</dbReference>
<dbReference type="SUPFAM" id="SSF50729">
    <property type="entry name" value="PH domain-like"/>
    <property type="match status" value="1"/>
</dbReference>
<dbReference type="SUPFAM" id="SSF50044">
    <property type="entry name" value="SH3-domain"/>
    <property type="match status" value="1"/>
</dbReference>
<dbReference type="PROSITE" id="PS50003">
    <property type="entry name" value="PH_DOMAIN"/>
    <property type="match status" value="1"/>
</dbReference>
<dbReference type="PROSITE" id="PS50238">
    <property type="entry name" value="RHOGAP"/>
    <property type="match status" value="1"/>
</dbReference>
<dbReference type="PROSITE" id="PS50002">
    <property type="entry name" value="SH3"/>
    <property type="match status" value="1"/>
</dbReference>
<name>RHG10_HUMAN</name>
<comment type="function">
    <text evidence="2 7 8">GTPase-activating protein that catalyzes the conversion of active GTP-bound Rho GTPases to their inactive GDP-bound form, thus suppressing various Rho GTPase-mediated cellular processes (PubMed:11432776). Also converts Cdc42 to an inactive GDP-bound state (PubMed:11432776). Essential for PTKB2 regulation of cytoskeletal organization via Rho family GTPases. Inhibits PAK2 proteolytic fragment PAK-2p34 kinase activity and changes its localization from the nucleus to the perinuclear region. Stabilizes PAK-2p34 thereby increasing stimulation of cell death (By similarity). Associates with MICAL1 on the endosomal membrane to promote Rab8-Rab10-dependent tubule extension. After dissociation with MICAL1, recruits WDR44 which connects the endoplasmic reticulum (ER) with the endosomal tubule, thereby participating in the export of a subset of neosynthesized proteins (PubMed:32344433).</text>
</comment>
<comment type="subunit">
    <text evidence="2 7 8">Interacts with PKN3 (PubMed:11432776). Interacts with caspase-activated PAK2 proteolytic fragment PAK-2p34; the interaction does not affect GRAF2/ARHGAP10 GTPase activation activity towards RHOA and CDC42 (By similarity). Interacts via its SH3 domain with PTK2/FAK1 (By similarity). Interacts with PTK2B/PYK2; the interaction negatively regulates GRAF2/ARHGAP10 GTPase-activating activity (By similarity). Interacts with MICAL1 and WDR44; complex formation might transit from GRAF2/ARHGAP10-MICAL1 to GRAF2/ARHGAP10-WDR44 complexes (PubMed:32344433).</text>
</comment>
<comment type="interaction">
    <interactant intactId="EBI-1390944">
        <id>A1A4S6</id>
    </interactant>
    <interactant intactId="EBI-1384335">
        <id>Q6P5Z2</id>
        <label>PKN3</label>
    </interactant>
    <organismsDiffer>false</organismsDiffer>
    <experiments>5</experiments>
</comment>
<comment type="subcellular location">
    <subcellularLocation>
        <location evidence="1">Cytoplasm</location>
    </subcellularLocation>
    <subcellularLocation>
        <location evidence="1">Cytoplasm</location>
        <location evidence="1">Perinuclear region</location>
    </subcellularLocation>
    <subcellularLocation>
        <location evidence="1">Cell membrane</location>
    </subcellularLocation>
    <subcellularLocation>
        <location evidence="8">Endosome membrane</location>
    </subcellularLocation>
    <text evidence="1 8">Association to cell membrane is dependent on PH domain. Colocalized with MICAL1, RAB8A, RAB8B and RAB10 on endosomal tubules (PubMed:32344433).</text>
</comment>
<comment type="tissue specificity">
    <text evidence="7">High levels of expression in heart and skeletal muscle.</text>
</comment>
<comment type="domain">
    <text evidence="8">The BAR domain is important to associate RAB8A (or RAB8B) and RAB10 to endosomal membrane to promote tubule extension. The BAR domain is also important to recruit WDR44 to endosomal tubules.</text>
</comment>
<comment type="PTM">
    <text evidence="7">Phosphorylated. Phosphorylated in vitro by constitutive active PKN3.</text>
</comment>
<comment type="sequence caution" evidence="10">
    <conflict type="frameshift">
        <sequence resource="EMBL-CDS" id="AAI26900"/>
    </conflict>
</comment>
<protein>
    <recommendedName>
        <fullName>Rho GTPase-activating protein 10</fullName>
    </recommendedName>
    <alternativeName>
        <fullName>GTPase regulator associated with focal adhesion kinase 2</fullName>
        <shortName evidence="9">GRAF2</shortName>
    </alternativeName>
    <alternativeName>
        <fullName>Graf-related protein 2</fullName>
    </alternativeName>
    <alternativeName>
        <fullName>Rho-type GTPase-activating protein 10</fullName>
    </alternativeName>
</protein>